<comment type="cofactor">
    <cofactor evidence="2">
        <name>FMN</name>
        <dbReference type="ChEBI" id="CHEBI:58210"/>
    </cofactor>
</comment>
<comment type="similarity">
    <text evidence="2">Belongs to the nitroreductase family.</text>
</comment>
<evidence type="ECO:0000250" key="1"/>
<evidence type="ECO:0000305" key="2"/>
<evidence type="ECO:0007829" key="3">
    <source>
        <dbReference type="PDB" id="7S1A"/>
    </source>
</evidence>
<name>Y1278_HAEIN</name>
<feature type="chain" id="PRO_0000072715" description="Putative NAD(P)H nitroreductase">
    <location>
        <begin position="1"/>
        <end position="220"/>
    </location>
</feature>
<feature type="binding site" evidence="1">
    <location>
        <begin position="155"/>
        <end position="160"/>
    </location>
    <ligand>
        <name>NAD(+)</name>
        <dbReference type="ChEBI" id="CHEBI:57540"/>
    </ligand>
</feature>
<feature type="helix" evidence="3">
    <location>
        <begin position="6"/>
        <end position="15"/>
    </location>
</feature>
<feature type="strand" evidence="3">
    <location>
        <begin position="20"/>
        <end position="22"/>
    </location>
</feature>
<feature type="helix" evidence="3">
    <location>
        <begin position="30"/>
        <end position="41"/>
    </location>
</feature>
<feature type="helix" evidence="3">
    <location>
        <begin position="46"/>
        <end position="48"/>
    </location>
</feature>
<feature type="strand" evidence="3">
    <location>
        <begin position="52"/>
        <end position="57"/>
    </location>
</feature>
<feature type="helix" evidence="3">
    <location>
        <begin position="60"/>
        <end position="66"/>
    </location>
</feature>
<feature type="helix" evidence="3">
    <location>
        <begin position="67"/>
        <end position="69"/>
    </location>
</feature>
<feature type="helix" evidence="3">
    <location>
        <begin position="71"/>
        <end position="73"/>
    </location>
</feature>
<feature type="helix" evidence="3">
    <location>
        <begin position="74"/>
        <end position="79"/>
    </location>
</feature>
<feature type="strand" evidence="3">
    <location>
        <begin position="81"/>
        <end position="90"/>
    </location>
</feature>
<feature type="helix" evidence="3">
    <location>
        <begin position="97"/>
        <end position="105"/>
    </location>
</feature>
<feature type="helix" evidence="3">
    <location>
        <begin position="110"/>
        <end position="125"/>
    </location>
</feature>
<feature type="helix" evidence="3">
    <location>
        <begin position="134"/>
        <end position="158"/>
    </location>
</feature>
<feature type="strand" evidence="3">
    <location>
        <begin position="162"/>
        <end position="166"/>
    </location>
</feature>
<feature type="helix" evidence="3">
    <location>
        <begin position="171"/>
        <end position="180"/>
    </location>
</feature>
<feature type="turn" evidence="3">
    <location>
        <begin position="186"/>
        <end position="188"/>
    </location>
</feature>
<feature type="strand" evidence="3">
    <location>
        <begin position="189"/>
        <end position="198"/>
    </location>
</feature>
<feature type="strand" evidence="3">
    <location>
        <begin position="200"/>
        <end position="202"/>
    </location>
</feature>
<feature type="helix" evidence="3">
    <location>
        <begin position="212"/>
        <end position="215"/>
    </location>
</feature>
<feature type="strand" evidence="3">
    <location>
        <begin position="216"/>
        <end position="219"/>
    </location>
</feature>
<keyword id="KW-0002">3D-structure</keyword>
<keyword id="KW-0285">Flavoprotein</keyword>
<keyword id="KW-0288">FMN</keyword>
<keyword id="KW-0520">NAD</keyword>
<keyword id="KW-0521">NADP</keyword>
<keyword id="KW-0560">Oxidoreductase</keyword>
<keyword id="KW-1185">Reference proteome</keyword>
<protein>
    <recommendedName>
        <fullName>Putative NAD(P)H nitroreductase</fullName>
        <ecNumber>1.-.-.-</ecNumber>
    </recommendedName>
</protein>
<reference key="1">
    <citation type="journal article" date="1995" name="Science">
        <title>Whole-genome random sequencing and assembly of Haemophilus influenzae Rd.</title>
        <authorList>
            <person name="Fleischmann R.D."/>
            <person name="Adams M.D."/>
            <person name="White O."/>
            <person name="Clayton R.A."/>
            <person name="Kirkness E.F."/>
            <person name="Kerlavage A.R."/>
            <person name="Bult C.J."/>
            <person name="Tomb J.-F."/>
            <person name="Dougherty B.A."/>
            <person name="Merrick J.M."/>
            <person name="McKenney K."/>
            <person name="Sutton G.G."/>
            <person name="FitzHugh W."/>
            <person name="Fields C.A."/>
            <person name="Gocayne J.D."/>
            <person name="Scott J.D."/>
            <person name="Shirley R."/>
            <person name="Liu L.-I."/>
            <person name="Glodek A."/>
            <person name="Kelley J.M."/>
            <person name="Weidman J.F."/>
            <person name="Phillips C.A."/>
            <person name="Spriggs T."/>
            <person name="Hedblom E."/>
            <person name="Cotton M.D."/>
            <person name="Utterback T.R."/>
            <person name="Hanna M.C."/>
            <person name="Nguyen D.T."/>
            <person name="Saudek D.M."/>
            <person name="Brandon R.C."/>
            <person name="Fine L.D."/>
            <person name="Fritchman J.L."/>
            <person name="Fuhrmann J.L."/>
            <person name="Geoghagen N.S.M."/>
            <person name="Gnehm C.L."/>
            <person name="McDonald L.A."/>
            <person name="Small K.V."/>
            <person name="Fraser C.M."/>
            <person name="Smith H.O."/>
            <person name="Venter J.C."/>
        </authorList>
    </citation>
    <scope>NUCLEOTIDE SEQUENCE [LARGE SCALE GENOMIC DNA]</scope>
    <source>
        <strain>ATCC 51907 / DSM 11121 / KW20 / Rd</strain>
    </source>
</reference>
<reference key="2">
    <citation type="journal article" date="2000" name="Electrophoresis">
        <title>Two-dimensional map of the proteome of Haemophilus influenzae.</title>
        <authorList>
            <person name="Langen H."/>
            <person name="Takacs B."/>
            <person name="Evers S."/>
            <person name="Berndt P."/>
            <person name="Lahm H.W."/>
            <person name="Wipf B."/>
            <person name="Gray C."/>
            <person name="Fountoulakis M."/>
        </authorList>
    </citation>
    <scope>IDENTIFICATION BY MASS SPECTROMETRY</scope>
    <source>
        <strain>ATCC 51907 / DSM 11121 / KW20 / Rd</strain>
    </source>
</reference>
<dbReference type="EC" id="1.-.-.-"/>
<dbReference type="EMBL" id="L42023">
    <property type="protein sequence ID" value="AAC22926.1"/>
    <property type="molecule type" value="Genomic_DNA"/>
</dbReference>
<dbReference type="PIR" id="B64114">
    <property type="entry name" value="B64114"/>
</dbReference>
<dbReference type="RefSeq" id="NP_439431.1">
    <property type="nucleotide sequence ID" value="NC_000907.1"/>
</dbReference>
<dbReference type="PDB" id="7S1A">
    <property type="method" value="X-ray"/>
    <property type="resolution" value="1.97 A"/>
    <property type="chains" value="A/B=1-220"/>
</dbReference>
<dbReference type="PDB" id="7T2Z">
    <property type="method" value="X-ray"/>
    <property type="resolution" value="2.25 A"/>
    <property type="chains" value="A/B=1-220"/>
</dbReference>
<dbReference type="PDB" id="7T33">
    <property type="method" value="X-ray"/>
    <property type="resolution" value="2.30 A"/>
    <property type="chains" value="A/B=1-220"/>
</dbReference>
<dbReference type="PDBsum" id="7S1A"/>
<dbReference type="PDBsum" id="7T2Z"/>
<dbReference type="PDBsum" id="7T33"/>
<dbReference type="SMR" id="Q57431"/>
<dbReference type="STRING" id="71421.HI_1278"/>
<dbReference type="EnsemblBacteria" id="AAC22926">
    <property type="protein sequence ID" value="AAC22926"/>
    <property type="gene ID" value="HI_1278"/>
</dbReference>
<dbReference type="KEGG" id="hin:HI_1278"/>
<dbReference type="PATRIC" id="fig|71421.8.peg.1329"/>
<dbReference type="eggNOG" id="COG0778">
    <property type="taxonomic scope" value="Bacteria"/>
</dbReference>
<dbReference type="HOGENOM" id="CLU_070764_4_1_6"/>
<dbReference type="OrthoDB" id="9809288at2"/>
<dbReference type="PhylomeDB" id="Q57431"/>
<dbReference type="BioCyc" id="HINF71421:G1GJ1-1303-MONOMER"/>
<dbReference type="Proteomes" id="UP000000579">
    <property type="component" value="Chromosome"/>
</dbReference>
<dbReference type="GO" id="GO:0005829">
    <property type="term" value="C:cytosol"/>
    <property type="evidence" value="ECO:0000318"/>
    <property type="project" value="GO_Central"/>
</dbReference>
<dbReference type="GO" id="GO:0016491">
    <property type="term" value="F:oxidoreductase activity"/>
    <property type="evidence" value="ECO:0000318"/>
    <property type="project" value="GO_Central"/>
</dbReference>
<dbReference type="GO" id="GO:0046256">
    <property type="term" value="P:2,4,6-trinitrotoluene catabolic process"/>
    <property type="evidence" value="ECO:0000318"/>
    <property type="project" value="GO_Central"/>
</dbReference>
<dbReference type="CDD" id="cd02149">
    <property type="entry name" value="NfsB-like"/>
    <property type="match status" value="1"/>
</dbReference>
<dbReference type="FunFam" id="3.40.109.10:FF:000008">
    <property type="entry name" value="Putative NAD(P)H nitroreductase"/>
    <property type="match status" value="1"/>
</dbReference>
<dbReference type="Gene3D" id="3.40.109.10">
    <property type="entry name" value="NADH Oxidase"/>
    <property type="match status" value="1"/>
</dbReference>
<dbReference type="InterPro" id="IPR033878">
    <property type="entry name" value="NfsB-like"/>
</dbReference>
<dbReference type="InterPro" id="IPR029479">
    <property type="entry name" value="Nitroreductase"/>
</dbReference>
<dbReference type="InterPro" id="IPR000415">
    <property type="entry name" value="Nitroreductase-like"/>
</dbReference>
<dbReference type="InterPro" id="IPR050627">
    <property type="entry name" value="Nitroreductase/BluB"/>
</dbReference>
<dbReference type="PANTHER" id="PTHR23026">
    <property type="entry name" value="NADPH NITROREDUCTASE"/>
    <property type="match status" value="1"/>
</dbReference>
<dbReference type="PANTHER" id="PTHR23026:SF125">
    <property type="entry name" value="OXYGEN-INSENSITIVE NAD(P)H NITROREDUCTASE"/>
    <property type="match status" value="1"/>
</dbReference>
<dbReference type="Pfam" id="PF00881">
    <property type="entry name" value="Nitroreductase"/>
    <property type="match status" value="1"/>
</dbReference>
<dbReference type="SUPFAM" id="SSF55469">
    <property type="entry name" value="FMN-dependent nitroreductase-like"/>
    <property type="match status" value="1"/>
</dbReference>
<proteinExistence type="evidence at protein level"/>
<gene>
    <name type="ordered locus">HI_1278</name>
</gene>
<organism>
    <name type="scientific">Haemophilus influenzae (strain ATCC 51907 / DSM 11121 / KW20 / Rd)</name>
    <dbReference type="NCBI Taxonomy" id="71421"/>
    <lineage>
        <taxon>Bacteria</taxon>
        <taxon>Pseudomonadati</taxon>
        <taxon>Pseudomonadota</taxon>
        <taxon>Gammaproteobacteria</taxon>
        <taxon>Pasteurellales</taxon>
        <taxon>Pasteurellaceae</taxon>
        <taxon>Haemophilus</taxon>
    </lineage>
</organism>
<accession>Q57431</accession>
<accession>O05050</accession>
<sequence length="220" mass="25189">MTQLTREQVLELFHQRSSTRYYDPTKKISDEDFECILECGRLSPSSVGSEPWKFLVIQNKTLREKMKPFSWGMINQLDNCSHLVVILAKKNARYDSPFFVDVMARKGLNAEQQQAALTKYKALQEEDMKLLENDRTLFDWCSKQTYIALANMLTGASALGIDSCPIEGFHYDKMNECLAEEGLFDPQEYAVSVAATFGYRSRDIAKKSRKGLDEVVKWVG</sequence>